<reference key="1">
    <citation type="journal article" date="2006" name="Genome Res.">
        <title>Massive genome erosion and functional adaptations provide insights into the symbiotic lifestyle of Sodalis glossinidius in the tsetse host.</title>
        <authorList>
            <person name="Toh H."/>
            <person name="Weiss B.L."/>
            <person name="Perkin S.A.H."/>
            <person name="Yamashita A."/>
            <person name="Oshima K."/>
            <person name="Hattori M."/>
            <person name="Aksoy S."/>
        </authorList>
    </citation>
    <scope>NUCLEOTIDE SEQUENCE [LARGE SCALE GENOMIC DNA]</scope>
    <source>
        <strain>morsitans</strain>
    </source>
</reference>
<name>CLPP_SODGM</name>
<feature type="chain" id="PRO_0000236404" description="ATP-dependent Clp protease proteolytic subunit">
    <location>
        <begin position="1"/>
        <end position="194"/>
    </location>
</feature>
<feature type="active site" description="Nucleophile" evidence="1">
    <location>
        <position position="98"/>
    </location>
</feature>
<feature type="active site" evidence="1">
    <location>
        <position position="123"/>
    </location>
</feature>
<sequence>MALVPMVVEQTSRGERSYDIFSRLLKERIIFMTGQVEDHMANLIVAQMMFLEAENPEKDIYLYINSPGGVITAGMSIYDTMQFIKPDVSTFCMGQAASMGAFLLAAGAKGKRFCLPNSRVMIHQPLGGFQGQATDIEIHAREILKVKARMNELMAKHTGQPLEVIERDTERDRFLSAPEAVDYGLVDSVLSQRT</sequence>
<organism>
    <name type="scientific">Sodalis glossinidius (strain morsitans)</name>
    <dbReference type="NCBI Taxonomy" id="343509"/>
    <lineage>
        <taxon>Bacteria</taxon>
        <taxon>Pseudomonadati</taxon>
        <taxon>Pseudomonadota</taxon>
        <taxon>Gammaproteobacteria</taxon>
        <taxon>Enterobacterales</taxon>
        <taxon>Bruguierivoracaceae</taxon>
        <taxon>Sodalis</taxon>
    </lineage>
</organism>
<protein>
    <recommendedName>
        <fullName evidence="1">ATP-dependent Clp protease proteolytic subunit</fullName>
        <ecNumber evidence="1">3.4.21.92</ecNumber>
    </recommendedName>
    <alternativeName>
        <fullName evidence="1">Endopeptidase Clp</fullName>
    </alternativeName>
</protein>
<dbReference type="EC" id="3.4.21.92" evidence="1"/>
<dbReference type="EMBL" id="AP008232">
    <property type="protein sequence ID" value="BAE73946.1"/>
    <property type="status" value="ALT_INIT"/>
    <property type="molecule type" value="Genomic_DNA"/>
</dbReference>
<dbReference type="RefSeq" id="WP_011410534.1">
    <property type="nucleotide sequence ID" value="NZ_LN854557.1"/>
</dbReference>
<dbReference type="SMR" id="Q2NV79"/>
<dbReference type="STRING" id="343509.SG0671"/>
<dbReference type="MEROPS" id="S14.001"/>
<dbReference type="KEGG" id="sgl:SG0671"/>
<dbReference type="eggNOG" id="COG0740">
    <property type="taxonomic scope" value="Bacteria"/>
</dbReference>
<dbReference type="HOGENOM" id="CLU_058707_3_2_6"/>
<dbReference type="OrthoDB" id="9802800at2"/>
<dbReference type="Proteomes" id="UP000001932">
    <property type="component" value="Chromosome"/>
</dbReference>
<dbReference type="GO" id="GO:0005737">
    <property type="term" value="C:cytoplasm"/>
    <property type="evidence" value="ECO:0007669"/>
    <property type="project" value="UniProtKB-SubCell"/>
</dbReference>
<dbReference type="GO" id="GO:0009368">
    <property type="term" value="C:endopeptidase Clp complex"/>
    <property type="evidence" value="ECO:0007669"/>
    <property type="project" value="TreeGrafter"/>
</dbReference>
<dbReference type="GO" id="GO:0004176">
    <property type="term" value="F:ATP-dependent peptidase activity"/>
    <property type="evidence" value="ECO:0007669"/>
    <property type="project" value="InterPro"/>
</dbReference>
<dbReference type="GO" id="GO:0051117">
    <property type="term" value="F:ATPase binding"/>
    <property type="evidence" value="ECO:0007669"/>
    <property type="project" value="TreeGrafter"/>
</dbReference>
<dbReference type="GO" id="GO:0004252">
    <property type="term" value="F:serine-type endopeptidase activity"/>
    <property type="evidence" value="ECO:0007669"/>
    <property type="project" value="UniProtKB-UniRule"/>
</dbReference>
<dbReference type="GO" id="GO:0006515">
    <property type="term" value="P:protein quality control for misfolded or incompletely synthesized proteins"/>
    <property type="evidence" value="ECO:0007669"/>
    <property type="project" value="TreeGrafter"/>
</dbReference>
<dbReference type="CDD" id="cd07017">
    <property type="entry name" value="S14_ClpP_2"/>
    <property type="match status" value="1"/>
</dbReference>
<dbReference type="FunFam" id="3.90.226.10:FF:000001">
    <property type="entry name" value="ATP-dependent Clp protease proteolytic subunit"/>
    <property type="match status" value="1"/>
</dbReference>
<dbReference type="Gene3D" id="3.90.226.10">
    <property type="entry name" value="2-enoyl-CoA Hydratase, Chain A, domain 1"/>
    <property type="match status" value="1"/>
</dbReference>
<dbReference type="HAMAP" id="MF_00444">
    <property type="entry name" value="ClpP"/>
    <property type="match status" value="1"/>
</dbReference>
<dbReference type="InterPro" id="IPR001907">
    <property type="entry name" value="ClpP"/>
</dbReference>
<dbReference type="InterPro" id="IPR029045">
    <property type="entry name" value="ClpP/crotonase-like_dom_sf"/>
</dbReference>
<dbReference type="InterPro" id="IPR023562">
    <property type="entry name" value="ClpP/TepA"/>
</dbReference>
<dbReference type="InterPro" id="IPR033135">
    <property type="entry name" value="ClpP_His_AS"/>
</dbReference>
<dbReference type="InterPro" id="IPR018215">
    <property type="entry name" value="ClpP_Ser_AS"/>
</dbReference>
<dbReference type="NCBIfam" id="TIGR00493">
    <property type="entry name" value="clpP"/>
    <property type="match status" value="1"/>
</dbReference>
<dbReference type="NCBIfam" id="NF001368">
    <property type="entry name" value="PRK00277.1"/>
    <property type="match status" value="1"/>
</dbReference>
<dbReference type="NCBIfam" id="NF009205">
    <property type="entry name" value="PRK12553.1"/>
    <property type="match status" value="1"/>
</dbReference>
<dbReference type="PANTHER" id="PTHR10381">
    <property type="entry name" value="ATP-DEPENDENT CLP PROTEASE PROTEOLYTIC SUBUNIT"/>
    <property type="match status" value="1"/>
</dbReference>
<dbReference type="PANTHER" id="PTHR10381:SF70">
    <property type="entry name" value="ATP-DEPENDENT CLP PROTEASE PROTEOLYTIC SUBUNIT"/>
    <property type="match status" value="1"/>
</dbReference>
<dbReference type="Pfam" id="PF00574">
    <property type="entry name" value="CLP_protease"/>
    <property type="match status" value="1"/>
</dbReference>
<dbReference type="PRINTS" id="PR00127">
    <property type="entry name" value="CLPPROTEASEP"/>
</dbReference>
<dbReference type="SUPFAM" id="SSF52096">
    <property type="entry name" value="ClpP/crotonase"/>
    <property type="match status" value="1"/>
</dbReference>
<dbReference type="PROSITE" id="PS00382">
    <property type="entry name" value="CLP_PROTEASE_HIS"/>
    <property type="match status" value="1"/>
</dbReference>
<dbReference type="PROSITE" id="PS00381">
    <property type="entry name" value="CLP_PROTEASE_SER"/>
    <property type="match status" value="1"/>
</dbReference>
<keyword id="KW-0963">Cytoplasm</keyword>
<keyword id="KW-0378">Hydrolase</keyword>
<keyword id="KW-0645">Protease</keyword>
<keyword id="KW-0720">Serine protease</keyword>
<proteinExistence type="inferred from homology"/>
<accession>Q2NV79</accession>
<comment type="function">
    <text evidence="1">Cleaves peptides in various proteins in a process that requires ATP hydrolysis. Has a chymotrypsin-like activity. Plays a major role in the degradation of misfolded proteins.</text>
</comment>
<comment type="catalytic activity">
    <reaction evidence="1">
        <text>Hydrolysis of proteins to small peptides in the presence of ATP and magnesium. alpha-casein is the usual test substrate. In the absence of ATP, only oligopeptides shorter than five residues are hydrolyzed (such as succinyl-Leu-Tyr-|-NHMec, and Leu-Tyr-Leu-|-Tyr-Trp, in which cleavage of the -Tyr-|-Leu- and -Tyr-|-Trp bonds also occurs).</text>
        <dbReference type="EC" id="3.4.21.92"/>
    </reaction>
</comment>
<comment type="subunit">
    <text evidence="1">Fourteen ClpP subunits assemble into 2 heptameric rings which stack back to back to give a disk-like structure with a central cavity, resembling the structure of eukaryotic proteasomes.</text>
</comment>
<comment type="subcellular location">
    <subcellularLocation>
        <location evidence="1">Cytoplasm</location>
    </subcellularLocation>
</comment>
<comment type="similarity">
    <text evidence="1">Belongs to the peptidase S14 family.</text>
</comment>
<comment type="sequence caution" evidence="2">
    <conflict type="erroneous initiation">
        <sequence resource="EMBL-CDS" id="BAE73946"/>
    </conflict>
</comment>
<evidence type="ECO:0000255" key="1">
    <source>
        <dbReference type="HAMAP-Rule" id="MF_00444"/>
    </source>
</evidence>
<evidence type="ECO:0000305" key="2"/>
<gene>
    <name evidence="1" type="primary">clpP</name>
    <name type="ordered locus">SG0671</name>
</gene>